<sequence length="447" mass="51927">MVYEEVSLKNLKIKNDYKSIELSEISKSDMHKRIKTFGWVDCCRTGKSITFFDLTCQFKSIKCVYEKKIDLTKCTSLTIYGTIQENKSKKENAEFEVLVEKLEIFNDAIAPSFPLNKESSFDTMMKYGHLALRNKQRGFFLKARSSLLKIIRDIFYEGNFIEITPPTIVQTQVEGGSTLFKLKYYDKDAYLTQSSQLYLETVAPVAYRAYCIASSYRAEKSNTTRHLSEYTHVEAELANIEFEDLINNIEHLVTESIKRFYDLLGDEIKDLYPEIKLQNVPKRPFKRIRYVDAIKFLNDEGVKKDDDTDFVVGDDIPDSREKIICERFGKGEPVLMTHFLVEHKPFYMKLDSSNETCTESFDLLYPGIGEIVGGSMRLDNYNKLIDGFKREGLNPEDYDWYLDMARFGPCSHGGYGLGFERLLMALMRYTNIEFATLYPRNTRRCHP</sequence>
<organism>
    <name type="scientific">Vairimorpha ceranae (strain BRL01)</name>
    <name type="common">Microsporidian parasite</name>
    <name type="synonym">Nosema ceranae</name>
    <dbReference type="NCBI Taxonomy" id="578460"/>
    <lineage>
        <taxon>Eukaryota</taxon>
        <taxon>Fungi</taxon>
        <taxon>Fungi incertae sedis</taxon>
        <taxon>Microsporidia</taxon>
        <taxon>Nosematidae</taxon>
        <taxon>Vairimorpha</taxon>
    </lineage>
</organism>
<feature type="chain" id="PRO_0000388390" description="Probable asparagine--tRNA ligase, cytoplasmic">
    <location>
        <begin position="1"/>
        <end position="447"/>
    </location>
</feature>
<evidence type="ECO:0000250" key="1"/>
<evidence type="ECO:0000305" key="2"/>
<comment type="catalytic activity">
    <reaction>
        <text>tRNA(Asn) + L-asparagine + ATP = L-asparaginyl-tRNA(Asn) + AMP + diphosphate + H(+)</text>
        <dbReference type="Rhea" id="RHEA:11180"/>
        <dbReference type="Rhea" id="RHEA-COMP:9659"/>
        <dbReference type="Rhea" id="RHEA-COMP:9674"/>
        <dbReference type="ChEBI" id="CHEBI:15378"/>
        <dbReference type="ChEBI" id="CHEBI:30616"/>
        <dbReference type="ChEBI" id="CHEBI:33019"/>
        <dbReference type="ChEBI" id="CHEBI:58048"/>
        <dbReference type="ChEBI" id="CHEBI:78442"/>
        <dbReference type="ChEBI" id="CHEBI:78515"/>
        <dbReference type="ChEBI" id="CHEBI:456215"/>
        <dbReference type="EC" id="6.1.1.22"/>
    </reaction>
</comment>
<comment type="subcellular location">
    <subcellularLocation>
        <location evidence="1">Cytoplasm</location>
    </subcellularLocation>
</comment>
<comment type="similarity">
    <text evidence="2">Belongs to the class-II aminoacyl-tRNA synthetase family.</text>
</comment>
<dbReference type="EC" id="6.1.1.22"/>
<dbReference type="EMBL" id="ACOL01000040">
    <property type="protein sequence ID" value="EEQ82596.1"/>
    <property type="molecule type" value="Genomic_DNA"/>
</dbReference>
<dbReference type="RefSeq" id="XP_002996267.1">
    <property type="nucleotide sequence ID" value="XM_002996221.1"/>
</dbReference>
<dbReference type="SMR" id="C4V847"/>
<dbReference type="FunCoup" id="C4V847">
    <property type="interactions" value="181"/>
</dbReference>
<dbReference type="STRING" id="578460.C4V847"/>
<dbReference type="KEGG" id="nce:NCER_100652"/>
<dbReference type="VEuPathDB" id="MicrosporidiaDB:NCER_100652"/>
<dbReference type="HOGENOM" id="CLU_004553_2_0_1"/>
<dbReference type="InParanoid" id="C4V847"/>
<dbReference type="OMA" id="DCCLYPR"/>
<dbReference type="OrthoDB" id="5426at6029"/>
<dbReference type="Proteomes" id="UP000009082">
    <property type="component" value="Unassembled WGS sequence"/>
</dbReference>
<dbReference type="GO" id="GO:0005737">
    <property type="term" value="C:cytoplasm"/>
    <property type="evidence" value="ECO:0007669"/>
    <property type="project" value="UniProtKB-SubCell"/>
</dbReference>
<dbReference type="GO" id="GO:0004816">
    <property type="term" value="F:asparagine-tRNA ligase activity"/>
    <property type="evidence" value="ECO:0007669"/>
    <property type="project" value="UniProtKB-EC"/>
</dbReference>
<dbReference type="GO" id="GO:0005524">
    <property type="term" value="F:ATP binding"/>
    <property type="evidence" value="ECO:0007669"/>
    <property type="project" value="UniProtKB-KW"/>
</dbReference>
<dbReference type="GO" id="GO:0006421">
    <property type="term" value="P:asparaginyl-tRNA aminoacylation"/>
    <property type="evidence" value="ECO:0007669"/>
    <property type="project" value="InterPro"/>
</dbReference>
<dbReference type="Gene3D" id="3.30.930.10">
    <property type="entry name" value="Bira Bifunctional Protein, Domain 2"/>
    <property type="match status" value="1"/>
</dbReference>
<dbReference type="Gene3D" id="2.40.50.140">
    <property type="entry name" value="Nucleic acid-binding proteins"/>
    <property type="match status" value="1"/>
</dbReference>
<dbReference type="InterPro" id="IPR004364">
    <property type="entry name" value="Aa-tRNA-synt_II"/>
</dbReference>
<dbReference type="InterPro" id="IPR006195">
    <property type="entry name" value="aa-tRNA-synth_II"/>
</dbReference>
<dbReference type="InterPro" id="IPR045864">
    <property type="entry name" value="aa-tRNA-synth_II/BPL/LPL"/>
</dbReference>
<dbReference type="InterPro" id="IPR004522">
    <property type="entry name" value="Asn-tRNA-ligase"/>
</dbReference>
<dbReference type="InterPro" id="IPR002312">
    <property type="entry name" value="Asp/Asn-tRNA-synth_IIb"/>
</dbReference>
<dbReference type="InterPro" id="IPR012340">
    <property type="entry name" value="NA-bd_OB-fold"/>
</dbReference>
<dbReference type="NCBIfam" id="TIGR00457">
    <property type="entry name" value="asnS"/>
    <property type="match status" value="1"/>
</dbReference>
<dbReference type="PANTHER" id="PTHR22594:SF16">
    <property type="entry name" value="ASPARAGINE--TRNA LIGASE, CYTOPLASMIC"/>
    <property type="match status" value="1"/>
</dbReference>
<dbReference type="PANTHER" id="PTHR22594">
    <property type="entry name" value="ASPARTYL/LYSYL-TRNA SYNTHETASE"/>
    <property type="match status" value="1"/>
</dbReference>
<dbReference type="Pfam" id="PF00152">
    <property type="entry name" value="tRNA-synt_2"/>
    <property type="match status" value="1"/>
</dbReference>
<dbReference type="PRINTS" id="PR01042">
    <property type="entry name" value="TRNASYNTHASP"/>
</dbReference>
<dbReference type="SUPFAM" id="SSF55681">
    <property type="entry name" value="Class II aaRS and biotin synthetases"/>
    <property type="match status" value="1"/>
</dbReference>
<dbReference type="SUPFAM" id="SSF50249">
    <property type="entry name" value="Nucleic acid-binding proteins"/>
    <property type="match status" value="1"/>
</dbReference>
<dbReference type="PROSITE" id="PS50862">
    <property type="entry name" value="AA_TRNA_LIGASE_II"/>
    <property type="match status" value="1"/>
</dbReference>
<reference key="1">
    <citation type="journal article" date="2009" name="PLoS Pathog.">
        <title>Genomic analyses of the microsporidian Nosema ceranae, an emergent pathogen of honey bees.</title>
        <authorList>
            <person name="Cornman R.S."/>
            <person name="Chen Y.P."/>
            <person name="Schatz M.C."/>
            <person name="Street C."/>
            <person name="Zhao Y."/>
            <person name="Desany B."/>
            <person name="Egholm M."/>
            <person name="Hutchison S."/>
            <person name="Pettis J.S."/>
            <person name="Lipkin W.I."/>
            <person name="Evans J.D."/>
        </authorList>
    </citation>
    <scope>NUCLEOTIDE SEQUENCE [LARGE SCALE GENOMIC DNA]</scope>
    <source>
        <strain>BRL01</strain>
    </source>
</reference>
<proteinExistence type="inferred from homology"/>
<name>SYNC_VAIC1</name>
<accession>C4V847</accession>
<protein>
    <recommendedName>
        <fullName>Probable asparagine--tRNA ligase, cytoplasmic</fullName>
        <ecNumber>6.1.1.22</ecNumber>
    </recommendedName>
    <alternativeName>
        <fullName>Asparaginyl-tRNA synthetase</fullName>
        <shortName>AsnRS</shortName>
    </alternativeName>
</protein>
<keyword id="KW-0030">Aminoacyl-tRNA synthetase</keyword>
<keyword id="KW-0067">ATP-binding</keyword>
<keyword id="KW-0963">Cytoplasm</keyword>
<keyword id="KW-0436">Ligase</keyword>
<keyword id="KW-0547">Nucleotide-binding</keyword>
<keyword id="KW-0648">Protein biosynthesis</keyword>
<keyword id="KW-1185">Reference proteome</keyword>
<gene>
    <name type="ORF">NCER_100652</name>
</gene>